<comment type="subcellular location">
    <subcellularLocation>
        <location evidence="3">Cell membrane</location>
        <topology evidence="3">Multi-pass membrane protein</topology>
    </subcellularLocation>
</comment>
<comment type="similarity">
    <text evidence="3">To M.pneumoniae MPN_333.</text>
</comment>
<name>Y335_MYCPN</name>
<organism>
    <name type="scientific">Mycoplasma pneumoniae (strain ATCC 29342 / M129 / Subtype 1)</name>
    <name type="common">Mycoplasmoides pneumoniae</name>
    <dbReference type="NCBI Taxonomy" id="272634"/>
    <lineage>
        <taxon>Bacteria</taxon>
        <taxon>Bacillati</taxon>
        <taxon>Mycoplasmatota</taxon>
        <taxon>Mycoplasmoidales</taxon>
        <taxon>Mycoplasmoidaceae</taxon>
        <taxon>Mycoplasmoides</taxon>
    </lineage>
</organism>
<sequence>MKLFKNWSDVNNVKQRQLLLAYFRFILKQIVKSWLLWVTAGLVLFLLALVLLIIPAFTKQDPLFLWSHPVVQMSSLIIPFIALFATIITFQVFINGYYNGLEILLITRFFTRGRLFFARLAVLFIWITGTAFLSGLFVSLTATLGATSQTVTDLVLSVFFGVLLLSLLFSCVLIIIAQFLNRTQSMLLLLLGVSLASFTTVILAFSIKPPSENLRDNGYQPLNLSLISKSKSKSVENVFTIIDSSNVSDPRNKKKSIVKTNPQAIWDEYGESSFFQSQYYWNVGYWINSLFRLNSLSDYRNFDVNLYFLNTKLNFDREVDTDKMVDFVSFRDQRHLYFLSYSFFINTHNLPTQPLPRILTYDNNGAFLEKIVPSFDDIKLDPPRVKKVYKFFSDTIIQSFRDYEAEEKERQEKEEKEKAEKDNGNGQDSNKVNSVSTEPNNKNSSDADSKDNNDSSDSQGKDSSKSKPKFRPRLPQFFDRVSINYSKFSSSFNTQLKHIHQGLSTRDEAMEIFKDKVALFYALSMAYDNFTFQKDSGIIDNTSLNKFKTEFNKKQKELTEKNKQKQDGKDQKSQRMTQGADKAVTVEPKAMQSEIGMTDQTNDQSSSETKDSMDSSDSSDTVDNTDESEDKQSEEEEKFDEEIENAKKMPKAEDAFFNTASIWLSSPFLFFENGAKREQRYEIHLLNSNTQVNNEIIKTNSFYYVSGEPIVGQEVIIAMVLVVTLGLLVGSFFAYQKRDIK</sequence>
<proteinExistence type="predicted"/>
<keyword id="KW-1003">Cell membrane</keyword>
<keyword id="KW-0472">Membrane</keyword>
<keyword id="KW-1185">Reference proteome</keyword>
<keyword id="KW-0812">Transmembrane</keyword>
<keyword id="KW-1133">Transmembrane helix</keyword>
<evidence type="ECO:0000255" key="1"/>
<evidence type="ECO:0000256" key="2">
    <source>
        <dbReference type="SAM" id="MobiDB-lite"/>
    </source>
</evidence>
<evidence type="ECO:0000305" key="3"/>
<gene>
    <name type="ordered locus">MPN_335</name>
    <name type="ORF">F10_orf741</name>
    <name type="ORF">MP501</name>
</gene>
<reference key="1">
    <citation type="journal article" date="1996" name="Nucleic Acids Res.">
        <title>Complete sequence analysis of the genome of the bacterium Mycoplasma pneumoniae.</title>
        <authorList>
            <person name="Himmelreich R."/>
            <person name="Hilbert H."/>
            <person name="Plagens H."/>
            <person name="Pirkl E."/>
            <person name="Li B.-C."/>
            <person name="Herrmann R."/>
        </authorList>
    </citation>
    <scope>NUCLEOTIDE SEQUENCE [LARGE SCALE GENOMIC DNA]</scope>
    <source>
        <strain>ATCC 29342 / M129 / Subtype 1</strain>
    </source>
</reference>
<accession>P75443</accession>
<protein>
    <recommendedName>
        <fullName>Uncharacterized protein MPN_335</fullName>
    </recommendedName>
</protein>
<feature type="chain" id="PRO_0000210662" description="Uncharacterized protein MPN_335">
    <location>
        <begin position="1"/>
        <end position="741"/>
    </location>
</feature>
<feature type="transmembrane region" description="Helical" evidence="1">
    <location>
        <begin position="34"/>
        <end position="54"/>
    </location>
</feature>
<feature type="transmembrane region" description="Helical" evidence="1">
    <location>
        <begin position="76"/>
        <end position="96"/>
    </location>
</feature>
<feature type="transmembrane region" description="Helical" evidence="1">
    <location>
        <begin position="120"/>
        <end position="140"/>
    </location>
</feature>
<feature type="transmembrane region" description="Helical" evidence="1">
    <location>
        <begin position="156"/>
        <end position="176"/>
    </location>
</feature>
<feature type="transmembrane region" description="Helical" evidence="1">
    <location>
        <begin position="187"/>
        <end position="207"/>
    </location>
</feature>
<feature type="transmembrane region" description="Helical" evidence="1">
    <location>
        <begin position="655"/>
        <end position="675"/>
    </location>
</feature>
<feature type="transmembrane region" description="Helical" evidence="1">
    <location>
        <begin position="715"/>
        <end position="735"/>
    </location>
</feature>
<feature type="region of interest" description="Disordered" evidence="2">
    <location>
        <begin position="404"/>
        <end position="473"/>
    </location>
</feature>
<feature type="region of interest" description="Disordered" evidence="2">
    <location>
        <begin position="555"/>
        <end position="647"/>
    </location>
</feature>
<feature type="compositionally biased region" description="Basic and acidic residues" evidence="2">
    <location>
        <begin position="404"/>
        <end position="423"/>
    </location>
</feature>
<feature type="compositionally biased region" description="Polar residues" evidence="2">
    <location>
        <begin position="424"/>
        <end position="439"/>
    </location>
</feature>
<feature type="compositionally biased region" description="Basic and acidic residues" evidence="2">
    <location>
        <begin position="445"/>
        <end position="465"/>
    </location>
</feature>
<feature type="compositionally biased region" description="Basic and acidic residues" evidence="2">
    <location>
        <begin position="555"/>
        <end position="573"/>
    </location>
</feature>
<feature type="compositionally biased region" description="Acidic residues" evidence="2">
    <location>
        <begin position="623"/>
        <end position="643"/>
    </location>
</feature>
<dbReference type="EMBL" id="U00089">
    <property type="protein sequence ID" value="AAB96149.1"/>
    <property type="molecule type" value="Genomic_DNA"/>
</dbReference>
<dbReference type="PIR" id="S73827">
    <property type="entry name" value="S73827"/>
</dbReference>
<dbReference type="RefSeq" id="NP_110023.1">
    <property type="nucleotide sequence ID" value="NC_000912.1"/>
</dbReference>
<dbReference type="RefSeq" id="WP_010874691.1">
    <property type="nucleotide sequence ID" value="NC_000912.1"/>
</dbReference>
<dbReference type="STRING" id="272634.MPN_335"/>
<dbReference type="EnsemblBacteria" id="AAB96149">
    <property type="protein sequence ID" value="AAB96149"/>
    <property type="gene ID" value="MPN_335"/>
</dbReference>
<dbReference type="KEGG" id="mpn:MPN_335"/>
<dbReference type="PATRIC" id="fig|272634.6.peg.359"/>
<dbReference type="HOGENOM" id="CLU_374626_0_0_14"/>
<dbReference type="BioCyc" id="MPNE272634:G1GJ3-529-MONOMER"/>
<dbReference type="Proteomes" id="UP000000808">
    <property type="component" value="Chromosome"/>
</dbReference>
<dbReference type="GO" id="GO:0005886">
    <property type="term" value="C:plasma membrane"/>
    <property type="evidence" value="ECO:0007669"/>
    <property type="project" value="UniProtKB-SubCell"/>
</dbReference>